<organism>
    <name type="scientific">Caulobacter vibrioides (strain ATCC 19089 / CIP 103742 / CB 15)</name>
    <name type="common">Caulobacter crescentus</name>
    <dbReference type="NCBI Taxonomy" id="190650"/>
    <lineage>
        <taxon>Bacteria</taxon>
        <taxon>Pseudomonadati</taxon>
        <taxon>Pseudomonadota</taxon>
        <taxon>Alphaproteobacteria</taxon>
        <taxon>Caulobacterales</taxon>
        <taxon>Caulobacteraceae</taxon>
        <taxon>Caulobacter</taxon>
    </lineage>
</organism>
<name>METXA_CAUVC</name>
<accession>Q9AAS1</accession>
<feature type="chain" id="PRO_0000155710" description="Homoserine O-acetyltransferase">
    <location>
        <begin position="1"/>
        <end position="382"/>
    </location>
</feature>
<feature type="domain" description="AB hydrolase-1" evidence="1">
    <location>
        <begin position="50"/>
        <end position="360"/>
    </location>
</feature>
<feature type="active site" description="Nucleophile" evidence="1">
    <location>
        <position position="155"/>
    </location>
</feature>
<feature type="active site" evidence="1">
    <location>
        <position position="321"/>
    </location>
</feature>
<feature type="active site" evidence="1">
    <location>
        <position position="354"/>
    </location>
</feature>
<feature type="binding site" evidence="1">
    <location>
        <position position="225"/>
    </location>
    <ligand>
        <name>substrate</name>
    </ligand>
</feature>
<feature type="binding site" evidence="1">
    <location>
        <position position="355"/>
    </location>
    <ligand>
        <name>substrate</name>
    </ligand>
</feature>
<sequence length="382" mass="41216">MAALDPITPAGGGTWRFPANEPLRLDSGGVIEGLEIAYQTYGQLNADKSNAVLICHALTGDQHVASPHPTTGKPGWWQRLVGPGKPLDPARHFIICSNVIGGCMGSTGPASINPATGKTYGLSFPVITIADMVRAQAMLVSALGVETLFAVVGGSMGGMQVQQWAVDYPERMFSAVVLASASRHSAQNIAFHEVGRQAIMADPDWRGGAYAEHGVRPEKGLAVARMAAHITYLSEPALQRKFGRELQRDGLSWGFDADFQVESYLRHQGSSFVDRFDANSYLYITRAMDYFDIAASHGGVLAKAFTRARNVRFCVLSFSSDWLYPTAENRHLVRALTAAGARAAFAEIESDKGHDAFLLDEPVMDAALEGFLASAERDRGLV</sequence>
<reference key="1">
    <citation type="journal article" date="2001" name="Proc. Natl. Acad. Sci. U.S.A.">
        <title>Complete genome sequence of Caulobacter crescentus.</title>
        <authorList>
            <person name="Nierman W.C."/>
            <person name="Feldblyum T.V."/>
            <person name="Laub M.T."/>
            <person name="Paulsen I.T."/>
            <person name="Nelson K.E."/>
            <person name="Eisen J.A."/>
            <person name="Heidelberg J.F."/>
            <person name="Alley M.R.K."/>
            <person name="Ohta N."/>
            <person name="Maddock J.R."/>
            <person name="Potocka I."/>
            <person name="Nelson W.C."/>
            <person name="Newton A."/>
            <person name="Stephens C."/>
            <person name="Phadke N.D."/>
            <person name="Ely B."/>
            <person name="DeBoy R.T."/>
            <person name="Dodson R.J."/>
            <person name="Durkin A.S."/>
            <person name="Gwinn M.L."/>
            <person name="Haft D.H."/>
            <person name="Kolonay J.F."/>
            <person name="Smit J."/>
            <person name="Craven M.B."/>
            <person name="Khouri H.M."/>
            <person name="Shetty J."/>
            <person name="Berry K.J."/>
            <person name="Utterback T.R."/>
            <person name="Tran K."/>
            <person name="Wolf A.M."/>
            <person name="Vamathevan J.J."/>
            <person name="Ermolaeva M.D."/>
            <person name="White O."/>
            <person name="Salzberg S.L."/>
            <person name="Venter J.C."/>
            <person name="Shapiro L."/>
            <person name="Fraser C.M."/>
        </authorList>
    </citation>
    <scope>NUCLEOTIDE SEQUENCE [LARGE SCALE GENOMIC DNA]</scope>
    <source>
        <strain>ATCC 19089 / CIP 103742 / CB 15</strain>
    </source>
</reference>
<reference key="2">
    <citation type="journal article" date="2017" name="Nat. Chem. Biol.">
        <title>Parallel evolution of non-homologous isofunctional enzymes in methionine biosynthesis.</title>
        <authorList>
            <person name="Bastard K."/>
            <person name="Perret A."/>
            <person name="Mariage A."/>
            <person name="Bessonnet T."/>
            <person name="Pinet-Turpault A."/>
            <person name="Petit J.L."/>
            <person name="Darii E."/>
            <person name="Bazire P."/>
            <person name="Vergne-Vaxelaire C."/>
            <person name="Brewee C."/>
            <person name="Debard A."/>
            <person name="Pellouin V."/>
            <person name="Besnard-Gonnet M."/>
            <person name="Artiguenave F."/>
            <person name="Medigue C."/>
            <person name="Vallenet D."/>
            <person name="Danchin A."/>
            <person name="Zaparucha A."/>
            <person name="Weissenbach J."/>
            <person name="Salanoubat M."/>
            <person name="de Berardinis V."/>
        </authorList>
    </citation>
    <scope>FUNCTION</scope>
    <scope>CATALYTIC ACTIVITY</scope>
</reference>
<keyword id="KW-0012">Acyltransferase</keyword>
<keyword id="KW-0028">Amino-acid biosynthesis</keyword>
<keyword id="KW-0963">Cytoplasm</keyword>
<keyword id="KW-0486">Methionine biosynthesis</keyword>
<keyword id="KW-1185">Reference proteome</keyword>
<keyword id="KW-0808">Transferase</keyword>
<gene>
    <name evidence="1 3" type="primary">metXA</name>
    <name type="ordered locus">CC_0525</name>
</gene>
<comment type="function">
    <text evidence="1 2">Transfers an acetyl group from acetyl-CoA to L-homoserine, forming acetyl-L-homoserine.</text>
</comment>
<comment type="catalytic activity">
    <reaction evidence="1 2">
        <text>L-homoserine + acetyl-CoA = O-acetyl-L-homoserine + CoA</text>
        <dbReference type="Rhea" id="RHEA:13701"/>
        <dbReference type="ChEBI" id="CHEBI:57287"/>
        <dbReference type="ChEBI" id="CHEBI:57288"/>
        <dbReference type="ChEBI" id="CHEBI:57476"/>
        <dbReference type="ChEBI" id="CHEBI:57716"/>
        <dbReference type="EC" id="2.3.1.31"/>
    </reaction>
</comment>
<comment type="pathway">
    <text evidence="1">Amino-acid biosynthesis; L-methionine biosynthesis via de novo pathway; O-acetyl-L-homoserine from L-homoserine: step 1/1.</text>
</comment>
<comment type="subunit">
    <text evidence="1">Homodimer.</text>
</comment>
<comment type="subcellular location">
    <subcellularLocation>
        <location evidence="1">Cytoplasm</location>
    </subcellularLocation>
</comment>
<comment type="similarity">
    <text evidence="1">Belongs to the AB hydrolase superfamily. MetX family.</text>
</comment>
<proteinExistence type="evidence at protein level"/>
<evidence type="ECO:0000255" key="1">
    <source>
        <dbReference type="HAMAP-Rule" id="MF_00296"/>
    </source>
</evidence>
<evidence type="ECO:0000269" key="2">
    <source>
    </source>
</evidence>
<evidence type="ECO:0000303" key="3">
    <source>
    </source>
</evidence>
<dbReference type="EC" id="2.3.1.31" evidence="1 2"/>
<dbReference type="EMBL" id="AE005673">
    <property type="protein sequence ID" value="AAK22512.1"/>
    <property type="molecule type" value="Genomic_DNA"/>
</dbReference>
<dbReference type="PIR" id="D87314">
    <property type="entry name" value="D87314"/>
</dbReference>
<dbReference type="RefSeq" id="NP_419344.1">
    <property type="nucleotide sequence ID" value="NC_002696.2"/>
</dbReference>
<dbReference type="RefSeq" id="WP_010918413.1">
    <property type="nucleotide sequence ID" value="NC_002696.2"/>
</dbReference>
<dbReference type="SMR" id="Q9AAS1"/>
<dbReference type="STRING" id="190650.CC_0525"/>
<dbReference type="ESTHER" id="caucr-CC0525">
    <property type="family name" value="Homoserine_transacetylase"/>
</dbReference>
<dbReference type="EnsemblBacteria" id="AAK22512">
    <property type="protein sequence ID" value="AAK22512"/>
    <property type="gene ID" value="CC_0525"/>
</dbReference>
<dbReference type="KEGG" id="ccr:CC_0525"/>
<dbReference type="PATRIC" id="fig|190650.5.peg.535"/>
<dbReference type="eggNOG" id="COG2021">
    <property type="taxonomic scope" value="Bacteria"/>
</dbReference>
<dbReference type="HOGENOM" id="CLU_028760_1_2_5"/>
<dbReference type="BioCyc" id="CAULO:CC0525-MONOMER"/>
<dbReference type="UniPathway" id="UPA00051">
    <property type="reaction ID" value="UER00074"/>
</dbReference>
<dbReference type="Proteomes" id="UP000001816">
    <property type="component" value="Chromosome"/>
</dbReference>
<dbReference type="GO" id="GO:0005737">
    <property type="term" value="C:cytoplasm"/>
    <property type="evidence" value="ECO:0007669"/>
    <property type="project" value="UniProtKB-SubCell"/>
</dbReference>
<dbReference type="GO" id="GO:0004414">
    <property type="term" value="F:homoserine O-acetyltransferase activity"/>
    <property type="evidence" value="ECO:0007669"/>
    <property type="project" value="UniProtKB-UniRule"/>
</dbReference>
<dbReference type="GO" id="GO:0009092">
    <property type="term" value="P:homoserine metabolic process"/>
    <property type="evidence" value="ECO:0007669"/>
    <property type="project" value="TreeGrafter"/>
</dbReference>
<dbReference type="GO" id="GO:0009086">
    <property type="term" value="P:methionine biosynthetic process"/>
    <property type="evidence" value="ECO:0007669"/>
    <property type="project" value="UniProtKB-UniRule"/>
</dbReference>
<dbReference type="FunFam" id="1.10.1740.110:FF:000001">
    <property type="entry name" value="Homoserine O-acetyltransferase"/>
    <property type="match status" value="1"/>
</dbReference>
<dbReference type="Gene3D" id="1.10.1740.110">
    <property type="match status" value="1"/>
</dbReference>
<dbReference type="Gene3D" id="3.40.50.1820">
    <property type="entry name" value="alpha/beta hydrolase"/>
    <property type="match status" value="1"/>
</dbReference>
<dbReference type="HAMAP" id="MF_00296">
    <property type="entry name" value="MetX_acyltransf"/>
    <property type="match status" value="1"/>
</dbReference>
<dbReference type="InterPro" id="IPR000073">
    <property type="entry name" value="AB_hydrolase_1"/>
</dbReference>
<dbReference type="InterPro" id="IPR029058">
    <property type="entry name" value="AB_hydrolase_fold"/>
</dbReference>
<dbReference type="InterPro" id="IPR008220">
    <property type="entry name" value="HAT_MetX-like"/>
</dbReference>
<dbReference type="NCBIfam" id="TIGR01392">
    <property type="entry name" value="homoserO_Ac_trn"/>
    <property type="match status" value="1"/>
</dbReference>
<dbReference type="NCBIfam" id="NF001209">
    <property type="entry name" value="PRK00175.1"/>
    <property type="match status" value="1"/>
</dbReference>
<dbReference type="PANTHER" id="PTHR32268">
    <property type="entry name" value="HOMOSERINE O-ACETYLTRANSFERASE"/>
    <property type="match status" value="1"/>
</dbReference>
<dbReference type="PANTHER" id="PTHR32268:SF11">
    <property type="entry name" value="HOMOSERINE O-ACETYLTRANSFERASE"/>
    <property type="match status" value="1"/>
</dbReference>
<dbReference type="Pfam" id="PF00561">
    <property type="entry name" value="Abhydrolase_1"/>
    <property type="match status" value="1"/>
</dbReference>
<dbReference type="PIRSF" id="PIRSF000443">
    <property type="entry name" value="Homoser_Ac_trans"/>
    <property type="match status" value="1"/>
</dbReference>
<dbReference type="SUPFAM" id="SSF53474">
    <property type="entry name" value="alpha/beta-Hydrolases"/>
    <property type="match status" value="1"/>
</dbReference>
<protein>
    <recommendedName>
        <fullName evidence="1">Homoserine O-acetyltransferase</fullName>
        <shortName evidence="1 3">HAT</shortName>
        <ecNumber evidence="1 2">2.3.1.31</ecNumber>
    </recommendedName>
    <alternativeName>
        <fullName evidence="1">Homoserine transacetylase</fullName>
        <shortName evidence="1">HTA</shortName>
    </alternativeName>
</protein>